<gene>
    <name evidence="1" type="primary">rlmH</name>
    <name type="ordered locus">M28_Spy1897</name>
</gene>
<organism>
    <name type="scientific">Streptococcus pyogenes serotype M28 (strain MGAS6180)</name>
    <dbReference type="NCBI Taxonomy" id="319701"/>
    <lineage>
        <taxon>Bacteria</taxon>
        <taxon>Bacillati</taxon>
        <taxon>Bacillota</taxon>
        <taxon>Bacilli</taxon>
        <taxon>Lactobacillales</taxon>
        <taxon>Streptococcaceae</taxon>
        <taxon>Streptococcus</taxon>
    </lineage>
</organism>
<proteinExistence type="inferred from homology"/>
<feature type="chain" id="PRO_0000260620" description="Ribosomal RNA large subunit methyltransferase H">
    <location>
        <begin position="1"/>
        <end position="159"/>
    </location>
</feature>
<feature type="binding site" evidence="1">
    <location>
        <position position="76"/>
    </location>
    <ligand>
        <name>S-adenosyl-L-methionine</name>
        <dbReference type="ChEBI" id="CHEBI:59789"/>
    </ligand>
</feature>
<feature type="binding site" evidence="1">
    <location>
        <position position="108"/>
    </location>
    <ligand>
        <name>S-adenosyl-L-methionine</name>
        <dbReference type="ChEBI" id="CHEBI:59789"/>
    </ligand>
</feature>
<feature type="binding site" evidence="1">
    <location>
        <begin position="127"/>
        <end position="132"/>
    </location>
    <ligand>
        <name>S-adenosyl-L-methionine</name>
        <dbReference type="ChEBI" id="CHEBI:59789"/>
    </ligand>
</feature>
<evidence type="ECO:0000255" key="1">
    <source>
        <dbReference type="HAMAP-Rule" id="MF_00658"/>
    </source>
</evidence>
<protein>
    <recommendedName>
        <fullName evidence="1">Ribosomal RNA large subunit methyltransferase H</fullName>
        <ecNumber evidence="1">2.1.1.177</ecNumber>
    </recommendedName>
    <alternativeName>
        <fullName evidence="1">23S rRNA (pseudouridine1915-N3)-methyltransferase</fullName>
    </alternativeName>
    <alternativeName>
        <fullName evidence="1">23S rRNA m3Psi1915 methyltransferase</fullName>
    </alternativeName>
    <alternativeName>
        <fullName evidence="1">rRNA (pseudouridine-N3-)-methyltransferase RlmH</fullName>
    </alternativeName>
</protein>
<comment type="function">
    <text evidence="1">Specifically methylates the pseudouridine at position 1915 (m3Psi1915) in 23S rRNA.</text>
</comment>
<comment type="catalytic activity">
    <reaction evidence="1">
        <text>pseudouridine(1915) in 23S rRNA + S-adenosyl-L-methionine = N(3)-methylpseudouridine(1915) in 23S rRNA + S-adenosyl-L-homocysteine + H(+)</text>
        <dbReference type="Rhea" id="RHEA:42752"/>
        <dbReference type="Rhea" id="RHEA-COMP:10221"/>
        <dbReference type="Rhea" id="RHEA-COMP:10222"/>
        <dbReference type="ChEBI" id="CHEBI:15378"/>
        <dbReference type="ChEBI" id="CHEBI:57856"/>
        <dbReference type="ChEBI" id="CHEBI:59789"/>
        <dbReference type="ChEBI" id="CHEBI:65314"/>
        <dbReference type="ChEBI" id="CHEBI:74486"/>
        <dbReference type="EC" id="2.1.1.177"/>
    </reaction>
</comment>
<comment type="subunit">
    <text evidence="1">Homodimer.</text>
</comment>
<comment type="subcellular location">
    <subcellularLocation>
        <location evidence="1">Cytoplasm</location>
    </subcellularLocation>
</comment>
<comment type="similarity">
    <text evidence="1">Belongs to the RNA methyltransferase RlmH family.</text>
</comment>
<reference key="1">
    <citation type="journal article" date="2005" name="J. Infect. Dis.">
        <title>Genome sequence of a serotype M28 strain of group A Streptococcus: potential new insights into puerperal sepsis and bacterial disease specificity.</title>
        <authorList>
            <person name="Green N.M."/>
            <person name="Zhang S."/>
            <person name="Porcella S.F."/>
            <person name="Nagiec M.J."/>
            <person name="Barbian K.D."/>
            <person name="Beres S.B."/>
            <person name="Lefebvre R.B."/>
            <person name="Musser J.M."/>
        </authorList>
    </citation>
    <scope>NUCLEOTIDE SEQUENCE [LARGE SCALE GENOMIC DNA]</scope>
    <source>
        <strain>MGAS6180</strain>
    </source>
</reference>
<sequence>MKVKLICVGKLKERYLKDGISEYQKRLSRFCQFEMIELTDERTPDKASFADNQLIMSKEAQRIHKKIGERDFVIALAIEGKQFPSETFSELISGVTVKGYSTITFIIGGSLGLDSIIKKRANMLMSFGLLTLPHQLMRLVLTEQIYRAFMITQGSPYHK</sequence>
<keyword id="KW-0963">Cytoplasm</keyword>
<keyword id="KW-0489">Methyltransferase</keyword>
<keyword id="KW-0698">rRNA processing</keyword>
<keyword id="KW-0949">S-adenosyl-L-methionine</keyword>
<keyword id="KW-0808">Transferase</keyword>
<accession>Q48QK3</accession>
<name>RLMH_STRPM</name>
<dbReference type="EC" id="2.1.1.177" evidence="1"/>
<dbReference type="EMBL" id="CP000056">
    <property type="protein sequence ID" value="AAX73007.1"/>
    <property type="molecule type" value="Genomic_DNA"/>
</dbReference>
<dbReference type="RefSeq" id="WP_002981964.1">
    <property type="nucleotide sequence ID" value="NC_007296.2"/>
</dbReference>
<dbReference type="SMR" id="Q48QK3"/>
<dbReference type="KEGG" id="spb:M28_Spy1897"/>
<dbReference type="HOGENOM" id="CLU_100552_0_0_9"/>
<dbReference type="GO" id="GO:0005737">
    <property type="term" value="C:cytoplasm"/>
    <property type="evidence" value="ECO:0007669"/>
    <property type="project" value="UniProtKB-SubCell"/>
</dbReference>
<dbReference type="GO" id="GO:0070038">
    <property type="term" value="F:rRNA (pseudouridine-N3-)-methyltransferase activity"/>
    <property type="evidence" value="ECO:0007669"/>
    <property type="project" value="UniProtKB-UniRule"/>
</dbReference>
<dbReference type="CDD" id="cd18081">
    <property type="entry name" value="RlmH-like"/>
    <property type="match status" value="1"/>
</dbReference>
<dbReference type="Gene3D" id="3.40.1280.10">
    <property type="match status" value="1"/>
</dbReference>
<dbReference type="HAMAP" id="MF_00658">
    <property type="entry name" value="23SrRNA_methyltr_H"/>
    <property type="match status" value="1"/>
</dbReference>
<dbReference type="InterPro" id="IPR029028">
    <property type="entry name" value="Alpha/beta_knot_MTases"/>
</dbReference>
<dbReference type="InterPro" id="IPR003742">
    <property type="entry name" value="RlmH-like"/>
</dbReference>
<dbReference type="InterPro" id="IPR029026">
    <property type="entry name" value="tRNA_m1G_MTases_N"/>
</dbReference>
<dbReference type="NCBIfam" id="NF000985">
    <property type="entry name" value="PRK00103.1-3"/>
    <property type="match status" value="1"/>
</dbReference>
<dbReference type="NCBIfam" id="TIGR00246">
    <property type="entry name" value="tRNA_RlmH_YbeA"/>
    <property type="match status" value="1"/>
</dbReference>
<dbReference type="PANTHER" id="PTHR33603">
    <property type="entry name" value="METHYLTRANSFERASE"/>
    <property type="match status" value="1"/>
</dbReference>
<dbReference type="PANTHER" id="PTHR33603:SF1">
    <property type="entry name" value="RIBOSOMAL RNA LARGE SUBUNIT METHYLTRANSFERASE H"/>
    <property type="match status" value="1"/>
</dbReference>
<dbReference type="Pfam" id="PF02590">
    <property type="entry name" value="SPOUT_MTase"/>
    <property type="match status" value="1"/>
</dbReference>
<dbReference type="PIRSF" id="PIRSF004505">
    <property type="entry name" value="MT_bac"/>
    <property type="match status" value="1"/>
</dbReference>
<dbReference type="SUPFAM" id="SSF75217">
    <property type="entry name" value="alpha/beta knot"/>
    <property type="match status" value="1"/>
</dbReference>